<proteinExistence type="inferred from homology"/>
<evidence type="ECO:0000255" key="1">
    <source>
        <dbReference type="HAMAP-Rule" id="MF_01523"/>
    </source>
</evidence>
<sequence>MSHVSICLLSEAGADPGALSILADRWGLVSDDQAVMALVLTAERLELRKRDEPKLGGIYVDFVSGTQAHRRKFGGGRGEAVAKAVGIKKGYLPRVVDATAGLGRDAFVLAALGCQVQMLERNPVVAALLDDGLRRGYLDAEIGPWLRERLTLLHASSLTALVAIEPCPEVVYLDPMYPHRQKSALVKKEMRVFQSLVGADNDADGLLAPARALATKRVVVKRPDYAEPLAGVAAQAAVVTKSHRFDIYPSSVTPPR</sequence>
<comment type="function">
    <text evidence="1">Specifically methylates the guanosine in position 1516 of 16S rRNA.</text>
</comment>
<comment type="catalytic activity">
    <reaction evidence="1">
        <text>guanosine(1516) in 16S rRNA + S-adenosyl-L-methionine = N(2)-methylguanosine(1516) in 16S rRNA + S-adenosyl-L-homocysteine + H(+)</text>
        <dbReference type="Rhea" id="RHEA:43220"/>
        <dbReference type="Rhea" id="RHEA-COMP:10412"/>
        <dbReference type="Rhea" id="RHEA-COMP:10413"/>
        <dbReference type="ChEBI" id="CHEBI:15378"/>
        <dbReference type="ChEBI" id="CHEBI:57856"/>
        <dbReference type="ChEBI" id="CHEBI:59789"/>
        <dbReference type="ChEBI" id="CHEBI:74269"/>
        <dbReference type="ChEBI" id="CHEBI:74481"/>
        <dbReference type="EC" id="2.1.1.242"/>
    </reaction>
</comment>
<comment type="subcellular location">
    <subcellularLocation>
        <location evidence="1">Cytoplasm</location>
    </subcellularLocation>
</comment>
<comment type="similarity">
    <text evidence="1">Belongs to the methyltransferase superfamily. RsmJ family.</text>
</comment>
<reference key="1">
    <citation type="submission" date="2008-02" db="EMBL/GenBank/DDBJ databases">
        <title>Complete sequence of Yersinia pseudotuberculosis YPIII.</title>
        <authorList>
            <consortium name="US DOE Joint Genome Institute"/>
            <person name="Copeland A."/>
            <person name="Lucas S."/>
            <person name="Lapidus A."/>
            <person name="Glavina del Rio T."/>
            <person name="Dalin E."/>
            <person name="Tice H."/>
            <person name="Bruce D."/>
            <person name="Goodwin L."/>
            <person name="Pitluck S."/>
            <person name="Munk A.C."/>
            <person name="Brettin T."/>
            <person name="Detter J.C."/>
            <person name="Han C."/>
            <person name="Tapia R."/>
            <person name="Schmutz J."/>
            <person name="Larimer F."/>
            <person name="Land M."/>
            <person name="Hauser L."/>
            <person name="Challacombe J.F."/>
            <person name="Green L."/>
            <person name="Lindler L.E."/>
            <person name="Nikolich M.P."/>
            <person name="Richardson P."/>
        </authorList>
    </citation>
    <scope>NUCLEOTIDE SEQUENCE [LARGE SCALE GENOMIC DNA]</scope>
    <source>
        <strain>YPIII</strain>
    </source>
</reference>
<organism>
    <name type="scientific">Yersinia pseudotuberculosis serotype O:3 (strain YPIII)</name>
    <dbReference type="NCBI Taxonomy" id="502800"/>
    <lineage>
        <taxon>Bacteria</taxon>
        <taxon>Pseudomonadati</taxon>
        <taxon>Pseudomonadota</taxon>
        <taxon>Gammaproteobacteria</taxon>
        <taxon>Enterobacterales</taxon>
        <taxon>Yersiniaceae</taxon>
        <taxon>Yersinia</taxon>
    </lineage>
</organism>
<gene>
    <name evidence="1" type="primary">rsmJ</name>
    <name type="ordered locus">YPK_0117</name>
</gene>
<keyword id="KW-0963">Cytoplasm</keyword>
<keyword id="KW-0489">Methyltransferase</keyword>
<keyword id="KW-0698">rRNA processing</keyword>
<keyword id="KW-0949">S-adenosyl-L-methionine</keyword>
<keyword id="KW-0808">Transferase</keyword>
<dbReference type="EC" id="2.1.1.242" evidence="1"/>
<dbReference type="EMBL" id="CP000950">
    <property type="protein sequence ID" value="ACA66430.1"/>
    <property type="molecule type" value="Genomic_DNA"/>
</dbReference>
<dbReference type="RefSeq" id="WP_012303364.1">
    <property type="nucleotide sequence ID" value="NZ_CP009792.1"/>
</dbReference>
<dbReference type="SMR" id="B1JHU7"/>
<dbReference type="KEGG" id="ypy:YPK_0117"/>
<dbReference type="PATRIC" id="fig|502800.11.peg.721"/>
<dbReference type="GO" id="GO:0005737">
    <property type="term" value="C:cytoplasm"/>
    <property type="evidence" value="ECO:0007669"/>
    <property type="project" value="UniProtKB-SubCell"/>
</dbReference>
<dbReference type="GO" id="GO:0008990">
    <property type="term" value="F:rRNA (guanine-N2-)-methyltransferase activity"/>
    <property type="evidence" value="ECO:0007669"/>
    <property type="project" value="UniProtKB-UniRule"/>
</dbReference>
<dbReference type="CDD" id="cd02440">
    <property type="entry name" value="AdoMet_MTases"/>
    <property type="match status" value="1"/>
</dbReference>
<dbReference type="Gene3D" id="3.40.50.150">
    <property type="entry name" value="Vaccinia Virus protein VP39"/>
    <property type="match status" value="1"/>
</dbReference>
<dbReference type="Gene3D" id="3.40.1630.10">
    <property type="entry name" value="YhiQ-like domain"/>
    <property type="match status" value="1"/>
</dbReference>
<dbReference type="HAMAP" id="MF_01523">
    <property type="entry name" value="16SrRNA_methyltr_J"/>
    <property type="match status" value="1"/>
</dbReference>
<dbReference type="InterPro" id="IPR007536">
    <property type="entry name" value="16SrRNA_methylTrfase_J"/>
</dbReference>
<dbReference type="InterPro" id="IPR029063">
    <property type="entry name" value="SAM-dependent_MTases_sf"/>
</dbReference>
<dbReference type="NCBIfam" id="NF008012">
    <property type="entry name" value="PRK10742.1"/>
    <property type="match status" value="1"/>
</dbReference>
<dbReference type="PANTHER" id="PTHR36112">
    <property type="entry name" value="RIBOSOMAL RNA SMALL SUBUNIT METHYLTRANSFERASE J"/>
    <property type="match status" value="1"/>
</dbReference>
<dbReference type="PANTHER" id="PTHR36112:SF1">
    <property type="entry name" value="RIBOSOMAL RNA SMALL SUBUNIT METHYLTRANSFERASE J"/>
    <property type="match status" value="1"/>
</dbReference>
<dbReference type="Pfam" id="PF04445">
    <property type="entry name" value="SAM_MT"/>
    <property type="match status" value="1"/>
</dbReference>
<dbReference type="SUPFAM" id="SSF53335">
    <property type="entry name" value="S-adenosyl-L-methionine-dependent methyltransferases"/>
    <property type="match status" value="1"/>
</dbReference>
<protein>
    <recommendedName>
        <fullName evidence="1">Ribosomal RNA small subunit methyltransferase J</fullName>
        <ecNumber evidence="1">2.1.1.242</ecNumber>
    </recommendedName>
    <alternativeName>
        <fullName evidence="1">16S rRNA m2G1516 methyltransferase</fullName>
    </alternativeName>
    <alternativeName>
        <fullName evidence="1">rRNA (guanine-N(2)-)-methyltransferase</fullName>
    </alternativeName>
</protein>
<feature type="chain" id="PRO_1000198517" description="Ribosomal RNA small subunit methyltransferase J">
    <location>
        <begin position="1"/>
        <end position="256"/>
    </location>
</feature>
<feature type="binding site" evidence="1">
    <location>
        <begin position="104"/>
        <end position="105"/>
    </location>
    <ligand>
        <name>S-adenosyl-L-methionine</name>
        <dbReference type="ChEBI" id="CHEBI:59789"/>
    </ligand>
</feature>
<feature type="binding site" evidence="1">
    <location>
        <begin position="120"/>
        <end position="121"/>
    </location>
    <ligand>
        <name>S-adenosyl-L-methionine</name>
        <dbReference type="ChEBI" id="CHEBI:59789"/>
    </ligand>
</feature>
<feature type="binding site" evidence="1">
    <location>
        <begin position="156"/>
        <end position="157"/>
    </location>
    <ligand>
        <name>S-adenosyl-L-methionine</name>
        <dbReference type="ChEBI" id="CHEBI:59789"/>
    </ligand>
</feature>
<feature type="binding site" evidence="1">
    <location>
        <position position="174"/>
    </location>
    <ligand>
        <name>S-adenosyl-L-methionine</name>
        <dbReference type="ChEBI" id="CHEBI:59789"/>
    </ligand>
</feature>
<name>RSMJ_YERPY</name>
<accession>B1JHU7</accession>